<proteinExistence type="evidence at protein level"/>
<reference key="1">
    <citation type="journal article" date="1992" name="J. Bacteriol.">
        <title>Nucleotide sequence of the tcmII-tcmIV region of the tetracenomycin C biosynthetic gene cluster of Streptomyces glaucescens and evidence that the tcmN gene encodes a multifunctional cyclase-dehydratase-O-methyl transferase.</title>
        <authorList>
            <person name="Summers R.G."/>
            <person name="Wendt-Pienkowski E."/>
            <person name="Motamedi H."/>
            <person name="Hutchinson C.R."/>
        </authorList>
    </citation>
    <scope>NUCLEOTIDE SEQUENCE [GENOMIC DNA]</scope>
    <scope>FUNCTION</scope>
    <scope>PATHWAY</scope>
    <scope>DOMAIN</scope>
    <source>
        <strain>DSM 40716 / ETH 22794 / Tue 49</strain>
    </source>
</reference>
<reference key="2">
    <citation type="journal article" date="1989" name="EMBO J.">
        <title>Analysis of the nucleotide sequence of the Streptomyces glaucescens tcmI genes provides key information about the enzymology of polyketide antibiotic biosynthesis.</title>
        <authorList>
            <person name="Bibb M.J."/>
            <person name="Biro S."/>
            <person name="Motamedi H."/>
            <person name="Collins J.F."/>
            <person name="Hutchinson C.R."/>
        </authorList>
    </citation>
    <scope>NUCLEOTIDE SEQUENCE [GENOMIC DNA] OF 1-17</scope>
    <source>
        <strain>DSM 40716 / ETH 22794 / Tue 49</strain>
    </source>
</reference>
<reference key="3">
    <citation type="journal article" date="1993" name="Science">
        <title>Enzymatic synthesis of a bacterial polyketide from acetyl and malonyl coenzyme A.</title>
        <authorList>
            <person name="Shen B."/>
            <person name="Hutchinson C.R."/>
        </authorList>
    </citation>
    <scope>FUNCTION</scope>
    <scope>SUBUNIT</scope>
    <source>
        <strain>DSM 40716 / ETH 22794 / Tue 49</strain>
    </source>
</reference>
<reference key="4">
    <citation type="journal article" date="1996" name="Proc. Natl. Acad. Sci. U.S.A.">
        <title>Deciphering the mechanism for the assembly of aromatic polyketides by a bacterial polyketide synthase.</title>
        <authorList>
            <person name="Shen B."/>
            <person name="Hutchinson C.R."/>
        </authorList>
    </citation>
    <scope>PROTEIN SEQUENCE OF 2-23</scope>
    <scope>FUNCTION</scope>
    <scope>BIOPHYSICOCHEMICAL PROPERTIES</scope>
    <scope>SUBUNIT</scope>
    <scope>DOMAIN</scope>
    <scope>DISRUPTION PHENOTYPE</scope>
    <source>
        <strain>DSM 40716 / ETH 22794 / Tue 49</strain>
    </source>
</reference>
<reference key="5">
    <citation type="journal article" date="1998" name="Biochemistry">
        <title>Reconstitution of the iterative type II polyketide synthase for tetracenomycin F2 biosynthesis.</title>
        <authorList>
            <person name="Bao W."/>
            <person name="Wendt-Pienkowski E."/>
            <person name="Hutchinson C.R."/>
        </authorList>
    </citation>
    <scope>FUNCTION</scope>
    <scope>CATALYTIC ACTIVITY</scope>
    <scope>PATHWAY</scope>
    <source>
        <strain>DSM 40716 / ETH 22794 / Tue 49</strain>
    </source>
</reference>
<reference evidence="15 16 17" key="6">
    <citation type="journal article" date="2008" name="Proc. Natl. Acad. Sci. U.S.A.">
        <title>Crystal structure and functional analysis of tetracenomycin ARO/CYC: implications for cyclization specificity of aromatic polyketides.</title>
        <authorList>
            <person name="Ames B.D."/>
            <person name="Korman T.P."/>
            <person name="Zhang W."/>
            <person name="Smith P."/>
            <person name="Vu T."/>
            <person name="Tang Y."/>
            <person name="Tsai S.C."/>
        </authorList>
    </citation>
    <scope>X-RAY CRYSTALLOGRAPHY (1.90 ANGSTROMS) OF 1-170</scope>
    <scope>FUNCTION</scope>
    <scope>DOMAIN</scope>
    <scope>ACTIVE SITE</scope>
    <scope>MUTAGENESIS OF GLU-34; TYR-35; TRP-63; ARG-69; TRP-108; GLN-110 AND ASN-136</scope>
</reference>
<reference evidence="18" key="7">
    <citation type="journal article" date="2012" name="Biochemistry">
        <title>Insight into the molecular basis of aromatic polyketide cyclization: crystal structure and in vitro characterization of WhiE-ORFVI.</title>
        <authorList>
            <person name="Lee M.Y."/>
            <person name="Ames B.D."/>
            <person name="Tsai S.C."/>
        </authorList>
    </citation>
    <scope>X-RAY CRYSTALLOGRAPHY (1.67 ANGSTROMS) OF 1-169 IN COMPLEX WITH PLANT POLYKETIDE TAXIFOLIN</scope>
    <scope>ACTIVE SITE</scope>
</reference>
<reference key="8">
    <citation type="journal article" date="2021" name="Biochim. Biophys. Acta">
        <title>Conformational dynamics of Tetracenomycin aromatase/cyclase regulate polyketide binding and enzyme aggregation propensity.</title>
        <authorList>
            <person name="Valadares V.S."/>
            <person name="Martins L.C."/>
            <person name="Roman E.A."/>
            <person name="Valente A.P."/>
            <person name="Cino E.A."/>
            <person name="Moraes A.H."/>
        </authorList>
    </citation>
    <scope>STRUCTURE BY NMR</scope>
    <scope>MOLECULAR DYNAMICS SIMULATIONS</scope>
    <scope>BIOPHYSICOCHEMICAL PROPERTIES</scope>
    <scope>DOMAIN</scope>
</reference>
<accession>P16559</accession>
<dbReference type="EC" id="2.1.1.-" evidence="6"/>
<dbReference type="EC" id="2.3.1.235" evidence="7"/>
<dbReference type="EMBL" id="M80674">
    <property type="protein sequence ID" value="AAA67518.1"/>
    <property type="molecule type" value="Genomic_DNA"/>
</dbReference>
<dbReference type="EMBL" id="X15312">
    <property type="protein sequence ID" value="CAB38457.1"/>
    <property type="molecule type" value="Genomic_DNA"/>
</dbReference>
<dbReference type="PIR" id="B42276">
    <property type="entry name" value="S27696"/>
</dbReference>
<dbReference type="RefSeq" id="WP_244315260.1">
    <property type="nucleotide sequence ID" value="NZ_CP009438.1"/>
</dbReference>
<dbReference type="PDB" id="2RER">
    <property type="method" value="X-ray"/>
    <property type="resolution" value="1.90 A"/>
    <property type="chains" value="A=1-170"/>
</dbReference>
<dbReference type="PDB" id="2RES">
    <property type="method" value="X-ray"/>
    <property type="resolution" value="2.20 A"/>
    <property type="chains" value="A=1-170"/>
</dbReference>
<dbReference type="PDB" id="2REZ">
    <property type="method" value="X-ray"/>
    <property type="resolution" value="1.95 A"/>
    <property type="chains" value="A=1-154"/>
</dbReference>
<dbReference type="PDB" id="3TVQ">
    <property type="method" value="X-ray"/>
    <property type="resolution" value="1.67 A"/>
    <property type="chains" value="A=1-169"/>
</dbReference>
<dbReference type="PDBsum" id="2RER"/>
<dbReference type="PDBsum" id="2RES"/>
<dbReference type="PDBsum" id="2REZ"/>
<dbReference type="PDBsum" id="3TVQ"/>
<dbReference type="SMR" id="P16559"/>
<dbReference type="STRING" id="1907.SGLAU_26370"/>
<dbReference type="eggNOG" id="COG2226">
    <property type="taxonomic scope" value="Bacteria"/>
</dbReference>
<dbReference type="eggNOG" id="COG2867">
    <property type="taxonomic scope" value="Bacteria"/>
</dbReference>
<dbReference type="BioCyc" id="MetaCyc:MONOMER-18604"/>
<dbReference type="BRENDA" id="2.3.1.235">
    <property type="organism ID" value="6020"/>
</dbReference>
<dbReference type="UniPathway" id="UPA00174"/>
<dbReference type="EvolutionaryTrace" id="P16559"/>
<dbReference type="GO" id="GO:0008171">
    <property type="term" value="F:O-methyltransferase activity"/>
    <property type="evidence" value="ECO:0007669"/>
    <property type="project" value="InterPro"/>
</dbReference>
<dbReference type="GO" id="GO:0046983">
    <property type="term" value="F:protein dimerization activity"/>
    <property type="evidence" value="ECO:0007669"/>
    <property type="project" value="InterPro"/>
</dbReference>
<dbReference type="GO" id="GO:0017000">
    <property type="term" value="P:antibiotic biosynthetic process"/>
    <property type="evidence" value="ECO:0007669"/>
    <property type="project" value="UniProtKB-KW"/>
</dbReference>
<dbReference type="GO" id="GO:0032259">
    <property type="term" value="P:methylation"/>
    <property type="evidence" value="ECO:0007669"/>
    <property type="project" value="UniProtKB-KW"/>
</dbReference>
<dbReference type="CDD" id="cd02440">
    <property type="entry name" value="AdoMet_MTases"/>
    <property type="match status" value="1"/>
</dbReference>
<dbReference type="CDD" id="cd08860">
    <property type="entry name" value="TcmN_ARO-CYC_like"/>
    <property type="match status" value="1"/>
</dbReference>
<dbReference type="Gene3D" id="1.10.287.1350">
    <property type="match status" value="1"/>
</dbReference>
<dbReference type="Gene3D" id="3.30.530.20">
    <property type="match status" value="1"/>
</dbReference>
<dbReference type="Gene3D" id="3.40.50.150">
    <property type="entry name" value="Vaccinia Virus protein VP39"/>
    <property type="match status" value="1"/>
</dbReference>
<dbReference type="Gene3D" id="1.10.10.10">
    <property type="entry name" value="Winged helix-like DNA-binding domain superfamily/Winged helix DNA-binding domain"/>
    <property type="match status" value="1"/>
</dbReference>
<dbReference type="InterPro" id="IPR016461">
    <property type="entry name" value="COMT-like"/>
</dbReference>
<dbReference type="InterPro" id="IPR005031">
    <property type="entry name" value="COQ10_START"/>
</dbReference>
<dbReference type="InterPro" id="IPR001077">
    <property type="entry name" value="O_MeTrfase_dom"/>
</dbReference>
<dbReference type="InterPro" id="IPR012967">
    <property type="entry name" value="Plant_O-MeTrfase_dimerisation"/>
</dbReference>
<dbReference type="InterPro" id="IPR029063">
    <property type="entry name" value="SAM-dependent_MTases_sf"/>
</dbReference>
<dbReference type="InterPro" id="IPR023393">
    <property type="entry name" value="START-like_dom_sf"/>
</dbReference>
<dbReference type="InterPro" id="IPR036388">
    <property type="entry name" value="WH-like_DNA-bd_sf"/>
</dbReference>
<dbReference type="InterPro" id="IPR036390">
    <property type="entry name" value="WH_DNA-bd_sf"/>
</dbReference>
<dbReference type="PANTHER" id="PTHR43712:SF2">
    <property type="entry name" value="O-METHYLTRANSFERASE CICE"/>
    <property type="match status" value="1"/>
</dbReference>
<dbReference type="PANTHER" id="PTHR43712">
    <property type="entry name" value="PUTATIVE (AFU_ORTHOLOGUE AFUA_4G14580)-RELATED"/>
    <property type="match status" value="1"/>
</dbReference>
<dbReference type="Pfam" id="PF08100">
    <property type="entry name" value="Dimerisation"/>
    <property type="match status" value="1"/>
</dbReference>
<dbReference type="Pfam" id="PF00891">
    <property type="entry name" value="Methyltransf_2"/>
    <property type="match status" value="1"/>
</dbReference>
<dbReference type="Pfam" id="PF03364">
    <property type="entry name" value="Polyketide_cyc"/>
    <property type="match status" value="1"/>
</dbReference>
<dbReference type="SUPFAM" id="SSF55961">
    <property type="entry name" value="Bet v1-like"/>
    <property type="match status" value="1"/>
</dbReference>
<dbReference type="SUPFAM" id="SSF53335">
    <property type="entry name" value="S-adenosyl-L-methionine-dependent methyltransferases"/>
    <property type="match status" value="1"/>
</dbReference>
<dbReference type="SUPFAM" id="SSF46785">
    <property type="entry name" value="Winged helix' DNA-binding domain"/>
    <property type="match status" value="1"/>
</dbReference>
<dbReference type="PROSITE" id="PS51683">
    <property type="entry name" value="SAM_OMT_II"/>
    <property type="match status" value="1"/>
</dbReference>
<protein>
    <recommendedName>
        <fullName evidence="12">Tetracenomycin biosynthesis bifunctional cyclase/O-methyl transferase TcmN</fullName>
        <ecNumber evidence="6">2.1.1.-</ecNumber>
        <ecNumber evidence="7">2.3.1.235</ecNumber>
    </recommendedName>
    <alternativeName>
        <fullName evidence="8">Multifunctional cyclase-dehydratase-3-O-methyl transferase TcmN</fullName>
    </alternativeName>
    <domain>
        <recommendedName>
            <fullName evidence="12">Tetracenomycin polyketide synthase cyclase TcmN</fullName>
        </recommendedName>
        <alternativeName>
            <fullName evidence="12">TCM PKS</fullName>
        </alternativeName>
        <alternativeName>
            <fullName evidence="11">TcmN polyketide cyclase</fullName>
        </alternativeName>
        <alternativeName>
            <fullName evidence="10">Tetracenomycin aromatase/cyclase</fullName>
            <shortName evidence="9">Tcm ARO/CYC</shortName>
            <shortName evidence="9">Tetracenomycin ARO/CYC</shortName>
        </alternativeName>
    </domain>
    <domain>
        <recommendedName>
            <fullName evidence="11">Tcm D3 O-methyltransferase</fullName>
        </recommendedName>
    </domain>
</protein>
<sequence length="494" mass="55930">MAARTDNSIVVNAPFELVWDVTNDIEAWPELFSEYAEAEILRQDGDGFDFRLKTRPDANGRVWEWVSHRVPDKGSRTVRAHRVETGPFAYMNLHWTYRAVAGGTEMRWVQEFDMKPGAPFDNAHMTAHLNTTTRANMERIKKIIEDRHREGQRTPASVLPTELHAQQLLLLAASGRLARIVHVLTELRIADLLADGPRHVAELAKETDTHELSLYRVLRSAASVGVFAEGPVRTFSATPLSDGLRTGNPDGVLPLVKYNNMELTRRPYDEIMHSVRTGEPAFRRVFGSSFFEHLEANPEAGEFFERFMAHWSRRLVLDGLADQGMERFSRIADLGGGDGWFLAQILRRHPHATGLLMDLPRVAASAGPVLEEAKVADRVTVLPGDFFTDPVPTGYDAYLFKGVLHNWSDERAVTVLRRVREAIGDDDARLLIFDQVMAPENEWDHAKLLDIDMLVLFGGRERVLAEWRQLLLEADFDIVNTPSHTWTTLECRPV</sequence>
<evidence type="ECO:0000255" key="1">
    <source>
        <dbReference type="PROSITE-ProRule" id="PRU01020"/>
    </source>
</evidence>
<evidence type="ECO:0000269" key="2">
    <source>
    </source>
</evidence>
<evidence type="ECO:0000269" key="3">
    <source>
    </source>
</evidence>
<evidence type="ECO:0000269" key="4">
    <source>
    </source>
</evidence>
<evidence type="ECO:0000269" key="5">
    <source>
    </source>
</evidence>
<evidence type="ECO:0000269" key="6">
    <source>
    </source>
</evidence>
<evidence type="ECO:0000269" key="7">
    <source>
    </source>
</evidence>
<evidence type="ECO:0000303" key="8">
    <source>
    </source>
</evidence>
<evidence type="ECO:0000303" key="9">
    <source>
    </source>
</evidence>
<evidence type="ECO:0000303" key="10">
    <source>
    </source>
</evidence>
<evidence type="ECO:0000303" key="11">
    <source>
    </source>
</evidence>
<evidence type="ECO:0000305" key="12"/>
<evidence type="ECO:0000305" key="13">
    <source>
    </source>
</evidence>
<evidence type="ECO:0000305" key="14">
    <source>
    </source>
</evidence>
<evidence type="ECO:0007744" key="15">
    <source>
        <dbReference type="PDB" id="2RER"/>
    </source>
</evidence>
<evidence type="ECO:0007744" key="16">
    <source>
        <dbReference type="PDB" id="2RES"/>
    </source>
</evidence>
<evidence type="ECO:0007744" key="17">
    <source>
        <dbReference type="PDB" id="2REZ"/>
    </source>
</evidence>
<evidence type="ECO:0007744" key="18">
    <source>
        <dbReference type="PDB" id="3TVQ"/>
    </source>
</evidence>
<evidence type="ECO:0007829" key="19">
    <source>
        <dbReference type="PDB" id="3TVQ"/>
    </source>
</evidence>
<keyword id="KW-0002">3D-structure</keyword>
<keyword id="KW-0045">Antibiotic biosynthesis</keyword>
<keyword id="KW-0903">Direct protein sequencing</keyword>
<keyword id="KW-0489">Methyltransferase</keyword>
<keyword id="KW-0511">Multifunctional enzyme</keyword>
<keyword id="KW-0949">S-adenosyl-L-methionine</keyword>
<keyword id="KW-0808">Transferase</keyword>
<organism>
    <name type="scientific">Streptomyces glaucescens</name>
    <dbReference type="NCBI Taxonomy" id="1907"/>
    <lineage>
        <taxon>Bacteria</taxon>
        <taxon>Bacillati</taxon>
        <taxon>Actinomycetota</taxon>
        <taxon>Actinomycetes</taxon>
        <taxon>Kitasatosporales</taxon>
        <taxon>Streptomycetaceae</taxon>
        <taxon>Streptomyces</taxon>
    </lineage>
</organism>
<name>TCMN_STRGA</name>
<feature type="initiator methionine" description="Removed" evidence="6">
    <location>
        <position position="1"/>
    </location>
</feature>
<feature type="chain" id="PRO_0000072456" description="Tetracenomycin biosynthesis bifunctional cyclase/O-methyl transferase TcmN">
    <location>
        <begin position="2"/>
        <end position="494"/>
    </location>
</feature>
<feature type="region of interest" description="Polyketide cyclase" evidence="12">
    <location>
        <begin position="11"/>
        <end position="140"/>
    </location>
</feature>
<feature type="region of interest" description="Methyltransferase" evidence="12">
    <location>
        <begin position="169"/>
        <end position="494"/>
    </location>
</feature>
<feature type="active site" description="Proton acceptor; for cyclase activity" evidence="14">
    <location>
        <position position="67"/>
    </location>
</feature>
<feature type="active site" description="Proton donor; for cyclase activity" evidence="13 14">
    <location>
        <position position="69"/>
    </location>
</feature>
<feature type="active site" description="Proton donor; for cyclase activity" evidence="13 14">
    <location>
        <position position="82"/>
    </location>
</feature>
<feature type="active site" description="Proton acceptor; for methyltransferase activity" evidence="1">
    <location>
        <position position="405"/>
    </location>
</feature>
<feature type="binding site" evidence="1">
    <location>
        <position position="358"/>
    </location>
    <ligand>
        <name>S-adenosyl-L-methionine</name>
        <dbReference type="ChEBI" id="CHEBI:59789"/>
    </ligand>
</feature>
<feature type="binding site" evidence="1">
    <location>
        <begin position="384"/>
        <end position="386"/>
    </location>
    <ligand>
        <name>S-adenosyl-L-methionine</name>
        <dbReference type="ChEBI" id="CHEBI:59789"/>
    </ligand>
</feature>
<feature type="mutagenesis site" description="Decrease in the production of the first ring." evidence="3">
    <original>E</original>
    <variation>A</variation>
    <variation>Q</variation>
    <location>
        <position position="34"/>
    </location>
</feature>
<feature type="mutagenesis site" description="Abolishes the production of the first ring." evidence="3">
    <original>Y</original>
    <variation>A</variation>
    <location>
        <position position="35"/>
    </location>
</feature>
<feature type="mutagenesis site" description="Strong decrease in the production of the first ring." evidence="3">
    <original>Y</original>
    <variation>T</variation>
    <location>
        <position position="35"/>
    </location>
</feature>
<feature type="mutagenesis site" description="Decrease in the production of the first ring." evidence="3">
    <original>W</original>
    <variation>N</variation>
    <location>
        <position position="63"/>
    </location>
</feature>
<feature type="mutagenesis site" description="Abolishes the production of the first ring." evidence="3">
    <original>R</original>
    <variation>A</variation>
    <variation>D</variation>
    <location>
        <position position="69"/>
    </location>
</feature>
<feature type="mutagenesis site" description="Strong decrease in the production of the first ring." evidence="3">
    <original>W</original>
    <variation>A</variation>
    <variation>L</variation>
    <location>
        <position position="108"/>
    </location>
</feature>
<feature type="mutagenesis site" description="Strong decrease in the production of the first ring." evidence="3">
    <original>Q</original>
    <variation>H</variation>
    <location>
        <position position="110"/>
    </location>
</feature>
<feature type="mutagenesis site" description="Decrease in the production of the first ring." evidence="3">
    <original>N</original>
    <variation>A</variation>
    <location>
        <position position="136"/>
    </location>
</feature>
<feature type="sequence conflict" description="In Ref. 4; AA sequence." evidence="12" ref="4">
    <original>F</original>
    <variation>E</variation>
    <location>
        <position position="15"/>
    </location>
</feature>
<feature type="strand" evidence="19">
    <location>
        <begin position="3"/>
        <end position="13"/>
    </location>
</feature>
<feature type="helix" evidence="19">
    <location>
        <begin position="15"/>
        <end position="22"/>
    </location>
</feature>
<feature type="helix" evidence="19">
    <location>
        <begin position="25"/>
        <end position="27"/>
    </location>
</feature>
<feature type="helix" evidence="19">
    <location>
        <begin position="28"/>
        <end position="31"/>
    </location>
</feature>
<feature type="strand" evidence="19">
    <location>
        <begin position="35"/>
        <end position="44"/>
    </location>
</feature>
<feature type="strand" evidence="19">
    <location>
        <begin position="47"/>
        <end position="54"/>
    </location>
</feature>
<feature type="strand" evidence="19">
    <location>
        <begin position="64"/>
        <end position="72"/>
    </location>
</feature>
<feature type="helix" evidence="19">
    <location>
        <begin position="73"/>
        <end position="75"/>
    </location>
</feature>
<feature type="strand" evidence="19">
    <location>
        <begin position="77"/>
        <end position="84"/>
    </location>
</feature>
<feature type="strand" evidence="19">
    <location>
        <begin position="88"/>
        <end position="100"/>
    </location>
</feature>
<feature type="strand" evidence="19">
    <location>
        <begin position="103"/>
        <end position="114"/>
    </location>
</feature>
<feature type="helix" evidence="19">
    <location>
        <begin position="122"/>
        <end position="151"/>
    </location>
</feature>
<comment type="function">
    <text evidence="2 3 5 6 7">Involved in the biosynthesis of tetracenomycin C (TCM C) (PubMed:1548230, PubMed:9609708). Part of a type II polyketide synthase (PKS) that catalyzes the synthesis of tetracenomycin F2 (TCM F2), a precursor of TCM C, from malonyl-CoA (PubMed:8248801, PubMed:9609708). The TcmN N-terminal domain, when coupled with the other components of the PKS, catalyzes the cyclization and aromatization of the linear polyketide intermediate (PubMed:1548230, PubMed:18388203, PubMed:8248801, PubMed:8692863). Catalyzes the cyclization of the first and second rings (PubMed:18388203). In addition, the C-terminal domain acts as a methyltransferase (PubMed:1548230, PubMed:8692863). It catalyzes the specific O-methylation of tetracenomycin D3 (TCM D3) to TCM B3, using S-adenosyl-L-methionine as the methyl donor (PubMed:8692863).</text>
</comment>
<comment type="catalytic activity">
    <reaction evidence="7">
        <text>10 malonyl-CoA + 8 H(+) = tetracenomycin F2 + 10 CO2 + 10 CoA + 2 H2O</text>
        <dbReference type="Rhea" id="RHEA:21348"/>
        <dbReference type="ChEBI" id="CHEBI:15377"/>
        <dbReference type="ChEBI" id="CHEBI:15378"/>
        <dbReference type="ChEBI" id="CHEBI:16526"/>
        <dbReference type="ChEBI" id="CHEBI:57287"/>
        <dbReference type="ChEBI" id="CHEBI:57384"/>
        <dbReference type="ChEBI" id="CHEBI:77982"/>
        <dbReference type="EC" id="2.3.1.235"/>
    </reaction>
    <physiologicalReaction direction="left-to-right" evidence="7">
        <dbReference type="Rhea" id="RHEA:21349"/>
    </physiologicalReaction>
</comment>
<comment type="biophysicochemical properties">
    <phDependence>
        <text evidence="6">Optimum pH is 8.0 for methyltransferase activity.</text>
    </phDependence>
    <temperatureDependence>
        <text evidence="4">Thermal resistance is enhanced at low protein and high salt concentrations, is pH-dependent and denaturation is irreversible.</text>
    </temperatureDependence>
</comment>
<comment type="pathway">
    <text evidence="2 7">Antibiotic biosynthesis; tetracenomycin C biosynthesis.</text>
</comment>
<comment type="subunit">
    <text evidence="5 6">The tetracenomycin polyketide synthase (TCM PKS) is composed of a ketosynthase complex (TcmKL), an acyl carrier protein (TcmM), a cyclase (TcmN) and a probable second cyclase (TcmJ) (PubMed:8248801, PubMed:8692863). TcmN is a homodimer in solution (PubMed:8692863).</text>
</comment>
<comment type="domain">
    <text evidence="2 3 4 6">This multifunction enzyme is comprised of two structurally and functionally independent domains (PubMed:1548230, PubMed:8692863). Contains a highly conserved interior pocket (PubMed:18388203). The size, shape and composition of the pocket are important to orient and specifically fold the polyketide chain (PubMed:18388203). The accessibility of the hydrophobic cavity is regulated by a dynamic equilibrium between open and closed states (PubMed:34139289).</text>
</comment>
<comment type="disruption phenotype">
    <text evidence="6">In the absence of TcmN, the linear polyketide intermediate formed by the minimal PKS consisting of the TcmJKLM proteins undergoes spontaneous cyclization to form some TCM F2 as well as SEK15 and many other aberrant shunt products.</text>
</comment>
<comment type="similarity">
    <text evidence="1">In the C-terminal section; belongs to the class I-like SAM-binding methyltransferase superfamily. Cation-independent O-methyltransferase family.</text>
</comment>
<gene>
    <name evidence="8" type="primary">tcmN</name>
</gene>